<organism>
    <name type="scientific">Clostridium perfringens (strain ATCC 13124 / DSM 756 / JCM 1290 / NCIMB 6125 / NCTC 8237 / Type A)</name>
    <dbReference type="NCBI Taxonomy" id="195103"/>
    <lineage>
        <taxon>Bacteria</taxon>
        <taxon>Bacillati</taxon>
        <taxon>Bacillota</taxon>
        <taxon>Clostridia</taxon>
        <taxon>Eubacteriales</taxon>
        <taxon>Clostridiaceae</taxon>
        <taxon>Clostridium</taxon>
    </lineage>
</organism>
<name>NANA_CLOP1</name>
<protein>
    <recommendedName>
        <fullName evidence="1">N-acetylneuraminate lyase</fullName>
        <shortName evidence="1">NAL</shortName>
        <shortName evidence="1">Neu5Ac lyase</shortName>
        <ecNumber evidence="1">4.1.3.3</ecNumber>
    </recommendedName>
    <alternativeName>
        <fullName evidence="1">N-acetylneuraminate pyruvate-lyase</fullName>
    </alternativeName>
    <alternativeName>
        <fullName evidence="1">N-acetylneuraminic acid aldolase</fullName>
    </alternativeName>
    <alternativeName>
        <fullName evidence="1">Sialate lyase</fullName>
    </alternativeName>
    <alternativeName>
        <fullName evidence="1">Sialic acid aldolase</fullName>
    </alternativeName>
    <alternativeName>
        <fullName evidence="1">Sialic acid lyase</fullName>
    </alternativeName>
</protein>
<keyword id="KW-0119">Carbohydrate metabolism</keyword>
<keyword id="KW-0963">Cytoplasm</keyword>
<keyword id="KW-0456">Lyase</keyword>
<keyword id="KW-0704">Schiff base</keyword>
<proteinExistence type="inferred from homology"/>
<evidence type="ECO:0000255" key="1">
    <source>
        <dbReference type="HAMAP-Rule" id="MF_01237"/>
    </source>
</evidence>
<reference key="1">
    <citation type="journal article" date="2006" name="Genome Res.">
        <title>Skewed genomic variability in strains of the toxigenic bacterial pathogen, Clostridium perfringens.</title>
        <authorList>
            <person name="Myers G.S.A."/>
            <person name="Rasko D.A."/>
            <person name="Cheung J.K."/>
            <person name="Ravel J."/>
            <person name="Seshadri R."/>
            <person name="DeBoy R.T."/>
            <person name="Ren Q."/>
            <person name="Varga J."/>
            <person name="Awad M.M."/>
            <person name="Brinkac L.M."/>
            <person name="Daugherty S.C."/>
            <person name="Haft D.H."/>
            <person name="Dodson R.J."/>
            <person name="Madupu R."/>
            <person name="Nelson W.C."/>
            <person name="Rosovitz M.J."/>
            <person name="Sullivan S.A."/>
            <person name="Khouri H."/>
            <person name="Dimitrov G.I."/>
            <person name="Watkins K.L."/>
            <person name="Mulligan S."/>
            <person name="Benton J."/>
            <person name="Radune D."/>
            <person name="Fisher D.J."/>
            <person name="Atkins H.S."/>
            <person name="Hiscox T."/>
            <person name="Jost B.H."/>
            <person name="Billington S.J."/>
            <person name="Songer J.G."/>
            <person name="McClane B.A."/>
            <person name="Titball R.W."/>
            <person name="Rood J.I."/>
            <person name="Melville S.B."/>
            <person name="Paulsen I.T."/>
        </authorList>
    </citation>
    <scope>NUCLEOTIDE SEQUENCE [LARGE SCALE GENOMIC DNA]</scope>
    <source>
        <strain>ATCC 13124 / DSM 756 / JCM 1290 / NCIMB 6125 / NCTC 8237 / S 107 / Type A</strain>
    </source>
</reference>
<comment type="function">
    <text evidence="1">Catalyzes the reversible aldol cleavage of N-acetylneuraminic acid (sialic acid; Neu5Ac) to form pyruvate and N-acetylmannosamine (ManNAc) via a Schiff base intermediate.</text>
</comment>
<comment type="catalytic activity">
    <reaction evidence="1">
        <text>aceneuramate = aldehydo-N-acetyl-D-mannosamine + pyruvate</text>
        <dbReference type="Rhea" id="RHEA:23296"/>
        <dbReference type="ChEBI" id="CHEBI:15361"/>
        <dbReference type="ChEBI" id="CHEBI:17122"/>
        <dbReference type="ChEBI" id="CHEBI:173083"/>
        <dbReference type="EC" id="4.1.3.3"/>
    </reaction>
</comment>
<comment type="pathway">
    <text evidence="1">Amino-sugar metabolism; N-acetylneuraminate degradation; D-fructose 6-phosphate from N-acetylneuraminate: step 1/5.</text>
</comment>
<comment type="subunit">
    <text evidence="1">Homotetramer.</text>
</comment>
<comment type="subcellular location">
    <subcellularLocation>
        <location evidence="1">Cytoplasm</location>
    </subcellularLocation>
</comment>
<comment type="similarity">
    <text evidence="1">Belongs to the DapA family. NanA subfamily.</text>
</comment>
<accession>Q0TUP8</accession>
<dbReference type="EC" id="4.1.3.3" evidence="1"/>
<dbReference type="EMBL" id="CP000246">
    <property type="protein sequence ID" value="ABG84330.1"/>
    <property type="molecule type" value="Genomic_DNA"/>
</dbReference>
<dbReference type="RefSeq" id="WP_003457546.1">
    <property type="nucleotide sequence ID" value="NC_008261.1"/>
</dbReference>
<dbReference type="SMR" id="Q0TUP8"/>
<dbReference type="STRING" id="195103.CPF_0178"/>
<dbReference type="PaxDb" id="195103-CPF_0178"/>
<dbReference type="KEGG" id="cpf:CPF_0178"/>
<dbReference type="eggNOG" id="COG0329">
    <property type="taxonomic scope" value="Bacteria"/>
</dbReference>
<dbReference type="HOGENOM" id="CLU_049343_6_0_9"/>
<dbReference type="UniPathway" id="UPA00629">
    <property type="reaction ID" value="UER00680"/>
</dbReference>
<dbReference type="Proteomes" id="UP000001823">
    <property type="component" value="Chromosome"/>
</dbReference>
<dbReference type="GO" id="GO:0005829">
    <property type="term" value="C:cytosol"/>
    <property type="evidence" value="ECO:0007669"/>
    <property type="project" value="TreeGrafter"/>
</dbReference>
<dbReference type="GO" id="GO:0008747">
    <property type="term" value="F:N-acetylneuraminate lyase activity"/>
    <property type="evidence" value="ECO:0007669"/>
    <property type="project" value="UniProtKB-UniRule"/>
</dbReference>
<dbReference type="GO" id="GO:0005975">
    <property type="term" value="P:carbohydrate metabolic process"/>
    <property type="evidence" value="ECO:0007669"/>
    <property type="project" value="UniProtKB-UniRule"/>
</dbReference>
<dbReference type="GO" id="GO:0019262">
    <property type="term" value="P:N-acetylneuraminate catabolic process"/>
    <property type="evidence" value="ECO:0007669"/>
    <property type="project" value="UniProtKB-UniRule"/>
</dbReference>
<dbReference type="CDD" id="cd00954">
    <property type="entry name" value="NAL"/>
    <property type="match status" value="1"/>
</dbReference>
<dbReference type="Gene3D" id="3.20.20.70">
    <property type="entry name" value="Aldolase class I"/>
    <property type="match status" value="1"/>
</dbReference>
<dbReference type="HAMAP" id="MF_01237">
    <property type="entry name" value="N_acetylneuram_lyase"/>
    <property type="match status" value="1"/>
</dbReference>
<dbReference type="InterPro" id="IPR013785">
    <property type="entry name" value="Aldolase_TIM"/>
</dbReference>
<dbReference type="InterPro" id="IPR002220">
    <property type="entry name" value="DapA-like"/>
</dbReference>
<dbReference type="InterPro" id="IPR005264">
    <property type="entry name" value="NanA"/>
</dbReference>
<dbReference type="InterPro" id="IPR020625">
    <property type="entry name" value="Schiff_base-form_aldolases_AS"/>
</dbReference>
<dbReference type="InterPro" id="IPR020624">
    <property type="entry name" value="Schiff_base-form_aldolases_CS"/>
</dbReference>
<dbReference type="NCBIfam" id="TIGR00683">
    <property type="entry name" value="nanA"/>
    <property type="match status" value="1"/>
</dbReference>
<dbReference type="NCBIfam" id="NF003164">
    <property type="entry name" value="PRK04147.1"/>
    <property type="match status" value="1"/>
</dbReference>
<dbReference type="PANTHER" id="PTHR42849">
    <property type="entry name" value="N-ACETYLNEURAMINATE LYASE"/>
    <property type="match status" value="1"/>
</dbReference>
<dbReference type="PANTHER" id="PTHR42849:SF1">
    <property type="entry name" value="N-ACETYLNEURAMINATE LYASE"/>
    <property type="match status" value="1"/>
</dbReference>
<dbReference type="Pfam" id="PF00701">
    <property type="entry name" value="DHDPS"/>
    <property type="match status" value="1"/>
</dbReference>
<dbReference type="PIRSF" id="PIRSF001365">
    <property type="entry name" value="DHDPS"/>
    <property type="match status" value="1"/>
</dbReference>
<dbReference type="PRINTS" id="PR00146">
    <property type="entry name" value="DHPICSNTHASE"/>
</dbReference>
<dbReference type="SMART" id="SM01130">
    <property type="entry name" value="DHDPS"/>
    <property type="match status" value="1"/>
</dbReference>
<dbReference type="SUPFAM" id="SSF51569">
    <property type="entry name" value="Aldolase"/>
    <property type="match status" value="1"/>
</dbReference>
<dbReference type="PROSITE" id="PS00665">
    <property type="entry name" value="DHDPS_1"/>
    <property type="match status" value="1"/>
</dbReference>
<dbReference type="PROSITE" id="PS00666">
    <property type="entry name" value="DHDPS_2"/>
    <property type="match status" value="1"/>
</dbReference>
<gene>
    <name evidence="1" type="primary">nanA</name>
    <name type="ordered locus">CPF_0178</name>
</gene>
<feature type="chain" id="PRO_1000066921" description="N-acetylneuraminate lyase">
    <location>
        <begin position="1"/>
        <end position="288"/>
    </location>
</feature>
<feature type="active site" description="Proton donor" evidence="1">
    <location>
        <position position="133"/>
    </location>
</feature>
<feature type="active site" description="Schiff-base intermediate with substrate" evidence="1">
    <location>
        <position position="161"/>
    </location>
</feature>
<feature type="binding site" evidence="1">
    <location>
        <position position="44"/>
    </location>
    <ligand>
        <name>aceneuramate</name>
        <dbReference type="ChEBI" id="CHEBI:173083"/>
    </ligand>
</feature>
<feature type="binding site" evidence="1">
    <location>
        <position position="45"/>
    </location>
    <ligand>
        <name>aceneuramate</name>
        <dbReference type="ChEBI" id="CHEBI:173083"/>
    </ligand>
</feature>
<feature type="binding site" evidence="1">
    <location>
        <position position="163"/>
    </location>
    <ligand>
        <name>aceneuramate</name>
        <dbReference type="ChEBI" id="CHEBI:173083"/>
    </ligand>
</feature>
<feature type="binding site" evidence="1">
    <location>
        <position position="185"/>
    </location>
    <ligand>
        <name>aceneuramate</name>
        <dbReference type="ChEBI" id="CHEBI:173083"/>
    </ligand>
</feature>
<feature type="binding site" evidence="1">
    <location>
        <position position="187"/>
    </location>
    <ligand>
        <name>aceneuramate</name>
        <dbReference type="ChEBI" id="CHEBI:173083"/>
    </ligand>
</feature>
<feature type="binding site" evidence="1">
    <location>
        <position position="188"/>
    </location>
    <ligand>
        <name>aceneuramate</name>
        <dbReference type="ChEBI" id="CHEBI:173083"/>
    </ligand>
</feature>
<feature type="binding site" evidence="1">
    <location>
        <position position="204"/>
    </location>
    <ligand>
        <name>aceneuramate</name>
        <dbReference type="ChEBI" id="CHEBI:173083"/>
    </ligand>
</feature>
<sequence length="288" mass="32387">MKGIYSALLVSFDKDGNINEKGLREIIRHNIDVCKIDGLYVGGSTGENFMLSTDEKKRIFEIAMDEAKGQVKLIAQVGSVNLKEAVELAKFTTDLGYDAISAVTPFYYKFDFNEIKHYYETIINSVDNKLIIYSIPFLTGVNMSIEQFAELFENDKIIGVKFTAADFYLLERMRKAFPDKLIFAGFDEMMLPATVLGVDGAIGSTFNVNGVRARQIFEAAQKGDIETALEVQHVTNDLITDILNNGLYQTIKLILQEQGVDAGYCRQPMKEATEEMIAKAKEINKKYF</sequence>